<sequence length="354" mass="39132">MTELKNDRYLRALLRQPVDVTPVWMMRQAGRYLPEYKATRAQAGDFMSLCKNAELACEVTLQPLRRYPLDAAILFSDILTIPDAMGLGLYFEAGEGPRFTAPVTCKADVEKLPIPDPEGELGYVMNAVRTIRRELKGEVPLIGFSGSPWTLATYMVEGGSSKAFTVIKKMMYADPQALHLLLDKLAKSVTLYLNAQIKAGAQSVMIFDTWGGVLTGRDYQQFSLYYMHKIVDGLLRENDGRRVPVTLFTKGGGQWLEAMAETGCDALGLDWTTDIADARRRVGHKVALQGNMDPSMLYAPPARIEDEVATILAGFGQGEGHVFNLGHGIHQDVPPEHAGAFVEAVHRLSAQYHN</sequence>
<dbReference type="EC" id="4.1.1.37" evidence="1"/>
<dbReference type="EMBL" id="CP000886">
    <property type="protein sequence ID" value="ABX70438.1"/>
    <property type="molecule type" value="Genomic_DNA"/>
</dbReference>
<dbReference type="RefSeq" id="WP_000137623.1">
    <property type="nucleotide sequence ID" value="NC_010102.1"/>
</dbReference>
<dbReference type="SMR" id="A9N0K9"/>
<dbReference type="KEGG" id="spq:SPAB_05157"/>
<dbReference type="PATRIC" id="fig|1016998.12.peg.4831"/>
<dbReference type="HOGENOM" id="CLU_040933_0_0_6"/>
<dbReference type="BioCyc" id="SENT1016998:SPAB_RS20990-MONOMER"/>
<dbReference type="UniPathway" id="UPA00251">
    <property type="reaction ID" value="UER00321"/>
</dbReference>
<dbReference type="Proteomes" id="UP000008556">
    <property type="component" value="Chromosome"/>
</dbReference>
<dbReference type="GO" id="GO:0005829">
    <property type="term" value="C:cytosol"/>
    <property type="evidence" value="ECO:0007669"/>
    <property type="project" value="TreeGrafter"/>
</dbReference>
<dbReference type="GO" id="GO:0004853">
    <property type="term" value="F:uroporphyrinogen decarboxylase activity"/>
    <property type="evidence" value="ECO:0007669"/>
    <property type="project" value="UniProtKB-UniRule"/>
</dbReference>
<dbReference type="GO" id="GO:0019353">
    <property type="term" value="P:protoporphyrinogen IX biosynthetic process from glutamate"/>
    <property type="evidence" value="ECO:0007669"/>
    <property type="project" value="TreeGrafter"/>
</dbReference>
<dbReference type="CDD" id="cd00717">
    <property type="entry name" value="URO-D"/>
    <property type="match status" value="1"/>
</dbReference>
<dbReference type="FunFam" id="3.20.20.210:FF:000001">
    <property type="entry name" value="Uroporphyrinogen decarboxylase"/>
    <property type="match status" value="1"/>
</dbReference>
<dbReference type="Gene3D" id="3.20.20.210">
    <property type="match status" value="1"/>
</dbReference>
<dbReference type="HAMAP" id="MF_00218">
    <property type="entry name" value="URO_D"/>
    <property type="match status" value="1"/>
</dbReference>
<dbReference type="InterPro" id="IPR038071">
    <property type="entry name" value="UROD/MetE-like_sf"/>
</dbReference>
<dbReference type="InterPro" id="IPR006361">
    <property type="entry name" value="Uroporphyrinogen_deCO2ase_HemE"/>
</dbReference>
<dbReference type="InterPro" id="IPR000257">
    <property type="entry name" value="Uroporphyrinogen_deCOase"/>
</dbReference>
<dbReference type="NCBIfam" id="TIGR01464">
    <property type="entry name" value="hemE"/>
    <property type="match status" value="1"/>
</dbReference>
<dbReference type="PANTHER" id="PTHR21091">
    <property type="entry name" value="METHYLTETRAHYDROFOLATE:HOMOCYSTEINE METHYLTRANSFERASE RELATED"/>
    <property type="match status" value="1"/>
</dbReference>
<dbReference type="PANTHER" id="PTHR21091:SF169">
    <property type="entry name" value="UROPORPHYRINOGEN DECARBOXYLASE"/>
    <property type="match status" value="1"/>
</dbReference>
<dbReference type="Pfam" id="PF01208">
    <property type="entry name" value="URO-D"/>
    <property type="match status" value="1"/>
</dbReference>
<dbReference type="SUPFAM" id="SSF51726">
    <property type="entry name" value="UROD/MetE-like"/>
    <property type="match status" value="1"/>
</dbReference>
<dbReference type="PROSITE" id="PS00906">
    <property type="entry name" value="UROD_1"/>
    <property type="match status" value="1"/>
</dbReference>
<dbReference type="PROSITE" id="PS00907">
    <property type="entry name" value="UROD_2"/>
    <property type="match status" value="1"/>
</dbReference>
<accession>A9N0K9</accession>
<organism>
    <name type="scientific">Salmonella paratyphi B (strain ATCC BAA-1250 / SPB7)</name>
    <dbReference type="NCBI Taxonomy" id="1016998"/>
    <lineage>
        <taxon>Bacteria</taxon>
        <taxon>Pseudomonadati</taxon>
        <taxon>Pseudomonadota</taxon>
        <taxon>Gammaproteobacteria</taxon>
        <taxon>Enterobacterales</taxon>
        <taxon>Enterobacteriaceae</taxon>
        <taxon>Salmonella</taxon>
    </lineage>
</organism>
<reference key="1">
    <citation type="submission" date="2007-11" db="EMBL/GenBank/DDBJ databases">
        <authorList>
            <consortium name="The Salmonella enterica serovar Paratyphi B Genome Sequencing Project"/>
            <person name="McClelland M."/>
            <person name="Sanderson E.K."/>
            <person name="Porwollik S."/>
            <person name="Spieth J."/>
            <person name="Clifton W.S."/>
            <person name="Fulton R."/>
            <person name="Cordes M."/>
            <person name="Wollam A."/>
            <person name="Shah N."/>
            <person name="Pepin K."/>
            <person name="Bhonagiri V."/>
            <person name="Nash W."/>
            <person name="Johnson M."/>
            <person name="Thiruvilangam P."/>
            <person name="Wilson R."/>
        </authorList>
    </citation>
    <scope>NUCLEOTIDE SEQUENCE [LARGE SCALE GENOMIC DNA]</scope>
    <source>
        <strain>ATCC BAA-1250 / SPB7</strain>
    </source>
</reference>
<name>DCUP_SALPB</name>
<gene>
    <name evidence="1" type="primary">hemE</name>
    <name type="ordered locus">SPAB_05157</name>
</gene>
<proteinExistence type="inferred from homology"/>
<feature type="chain" id="PRO_1000078085" description="Uroporphyrinogen decarboxylase">
    <location>
        <begin position="1"/>
        <end position="354"/>
    </location>
</feature>
<feature type="binding site" evidence="1">
    <location>
        <begin position="27"/>
        <end position="31"/>
    </location>
    <ligand>
        <name>substrate</name>
    </ligand>
</feature>
<feature type="binding site" evidence="1">
    <location>
        <position position="77"/>
    </location>
    <ligand>
        <name>substrate</name>
    </ligand>
</feature>
<feature type="binding site" evidence="1">
    <location>
        <position position="154"/>
    </location>
    <ligand>
        <name>substrate</name>
    </ligand>
</feature>
<feature type="binding site" evidence="1">
    <location>
        <position position="209"/>
    </location>
    <ligand>
        <name>substrate</name>
    </ligand>
</feature>
<feature type="binding site" evidence="1">
    <location>
        <position position="327"/>
    </location>
    <ligand>
        <name>substrate</name>
    </ligand>
</feature>
<feature type="site" description="Transition state stabilizer" evidence="1">
    <location>
        <position position="77"/>
    </location>
</feature>
<protein>
    <recommendedName>
        <fullName evidence="1">Uroporphyrinogen decarboxylase</fullName>
        <shortName evidence="1">UPD</shortName>
        <shortName evidence="1">URO-D</shortName>
        <ecNumber evidence="1">4.1.1.37</ecNumber>
    </recommendedName>
</protein>
<keyword id="KW-0963">Cytoplasm</keyword>
<keyword id="KW-0210">Decarboxylase</keyword>
<keyword id="KW-0456">Lyase</keyword>
<keyword id="KW-0627">Porphyrin biosynthesis</keyword>
<comment type="function">
    <text evidence="1">Catalyzes the decarboxylation of four acetate groups of uroporphyrinogen-III to yield coproporphyrinogen-III.</text>
</comment>
<comment type="catalytic activity">
    <reaction evidence="1">
        <text>uroporphyrinogen III + 4 H(+) = coproporphyrinogen III + 4 CO2</text>
        <dbReference type="Rhea" id="RHEA:19865"/>
        <dbReference type="ChEBI" id="CHEBI:15378"/>
        <dbReference type="ChEBI" id="CHEBI:16526"/>
        <dbReference type="ChEBI" id="CHEBI:57308"/>
        <dbReference type="ChEBI" id="CHEBI:57309"/>
        <dbReference type="EC" id="4.1.1.37"/>
    </reaction>
</comment>
<comment type="pathway">
    <text evidence="1">Porphyrin-containing compound metabolism; protoporphyrin-IX biosynthesis; coproporphyrinogen-III from 5-aminolevulinate: step 4/4.</text>
</comment>
<comment type="subunit">
    <text evidence="1">Homodimer.</text>
</comment>
<comment type="subcellular location">
    <subcellularLocation>
        <location evidence="1">Cytoplasm</location>
    </subcellularLocation>
</comment>
<comment type="similarity">
    <text evidence="1">Belongs to the uroporphyrinogen decarboxylase family.</text>
</comment>
<evidence type="ECO:0000255" key="1">
    <source>
        <dbReference type="HAMAP-Rule" id="MF_00218"/>
    </source>
</evidence>